<organism>
    <name type="scientific">Bos taurus</name>
    <name type="common">Bovine</name>
    <dbReference type="NCBI Taxonomy" id="9913"/>
    <lineage>
        <taxon>Eukaryota</taxon>
        <taxon>Metazoa</taxon>
        <taxon>Chordata</taxon>
        <taxon>Craniata</taxon>
        <taxon>Vertebrata</taxon>
        <taxon>Euteleostomi</taxon>
        <taxon>Mammalia</taxon>
        <taxon>Eutheria</taxon>
        <taxon>Laurasiatheria</taxon>
        <taxon>Artiodactyla</taxon>
        <taxon>Ruminantia</taxon>
        <taxon>Pecora</taxon>
        <taxon>Bovidae</taxon>
        <taxon>Bovinae</taxon>
        <taxon>Bos</taxon>
    </lineage>
</organism>
<accession>A6QLW9</accession>
<sequence length="707" mass="77673">MQNSESGSDSPASVALCSSAAAQAPVAQPVTASPQRVLVQAAGSAPKGAQMQPLSLPRVQQVTQQVQPAQHVYPAQLQYVEGGDAVFTNGALRTAYAYNPEPQMYAPSSAASYFEAPGGAQVTVAGSSPPAVPSHSMVGITMDVGGSPIVSSAGAYLIHGGMDGTRHTLAHTSRSSPATLEMAIENLQKSEGITSHKSGLLNSHLQWLLDNYETAEGVSLPRSSLYNHYLRHCQEHKLDPVNAASFGKLIRSVFMGLRTRRLGTRGNSKYHYYGIRLKPDSPLNRLQEDTQYMAMRQQPVHQKPRYRPAQKTDSLGESGSHSSLHSTPEQAMAAQSQHHQQYIDVSHVFPEFPAPDLGSVLLQESITLHDVKALQLAYRRHCEATLDVVMNLQFHYIEKLWLSFWNSKSSSDGPTSLPASDEEPEGAVLPKDKLVSLCKCDPVLRWMRTCDHILYQALVEILIPDVLRPVPSTLTQAIRNFAKSLEGWLTNAMSDFPQQVIQTKVGVVSAFAQTLRRYTSLNHLAQAARAVLQNTSQINQMLSDLNRVDFANVQEQASWVCQCEEGVVQRLEQDFKLTLQQQSSLDQWASWLDNVVTQVLKQHAGSPSFPKAARQFLLKWSFYSSMVIRDLTLRSAASFGSFHLIRLLYDEYMFYLVEHRVAEATGETPIAVMGEFNDLASLSLTLLDKGGCVWALPPVHSGGGGSP</sequence>
<dbReference type="EMBL" id="BC148113">
    <property type="protein sequence ID" value="AAI48114.1"/>
    <property type="molecule type" value="mRNA"/>
</dbReference>
<dbReference type="RefSeq" id="NP_001095642.1">
    <property type="nucleotide sequence ID" value="NM_001102172.1"/>
</dbReference>
<dbReference type="SMR" id="A6QLW9"/>
<dbReference type="FunCoup" id="A6QLW9">
    <property type="interactions" value="669"/>
</dbReference>
<dbReference type="STRING" id="9913.ENSBTAP00000062095"/>
<dbReference type="PaxDb" id="9913-ENSBTAP00000023492"/>
<dbReference type="Ensembl" id="ENSBTAT00000023492.7">
    <property type="protein sequence ID" value="ENSBTAP00000023492.5"/>
    <property type="gene ID" value="ENSBTAG00000017661.7"/>
</dbReference>
<dbReference type="GeneID" id="534475"/>
<dbReference type="KEGG" id="bta:534475"/>
<dbReference type="CTD" id="5990"/>
<dbReference type="VEuPathDB" id="HostDB:ENSBTAG00000017661"/>
<dbReference type="VGNC" id="VGNC:33894">
    <property type="gene designation" value="RFX2"/>
</dbReference>
<dbReference type="eggNOG" id="KOG3712">
    <property type="taxonomic scope" value="Eukaryota"/>
</dbReference>
<dbReference type="GeneTree" id="ENSGT01050000244879"/>
<dbReference type="HOGENOM" id="CLU_010393_1_1_1"/>
<dbReference type="InParanoid" id="A6QLW9"/>
<dbReference type="OrthoDB" id="10056949at2759"/>
<dbReference type="TreeFam" id="TF321340"/>
<dbReference type="Proteomes" id="UP000009136">
    <property type="component" value="Chromosome 7"/>
</dbReference>
<dbReference type="Bgee" id="ENSBTAG00000017661">
    <property type="expression patterns" value="Expressed in spermatid and 101 other cell types or tissues"/>
</dbReference>
<dbReference type="GO" id="GO:0005737">
    <property type="term" value="C:cytoplasm"/>
    <property type="evidence" value="ECO:0000250"/>
    <property type="project" value="UniProtKB"/>
</dbReference>
<dbReference type="GO" id="GO:0005634">
    <property type="term" value="C:nucleus"/>
    <property type="evidence" value="ECO:0000250"/>
    <property type="project" value="UniProtKB"/>
</dbReference>
<dbReference type="GO" id="GO:0003700">
    <property type="term" value="F:DNA-binding transcription factor activity"/>
    <property type="evidence" value="ECO:0000250"/>
    <property type="project" value="UniProtKB"/>
</dbReference>
<dbReference type="GO" id="GO:0000981">
    <property type="term" value="F:DNA-binding transcription factor activity, RNA polymerase II-specific"/>
    <property type="evidence" value="ECO:0000318"/>
    <property type="project" value="GO_Central"/>
</dbReference>
<dbReference type="GO" id="GO:0000978">
    <property type="term" value="F:RNA polymerase II cis-regulatory region sequence-specific DNA binding"/>
    <property type="evidence" value="ECO:0000250"/>
    <property type="project" value="UniProtKB"/>
</dbReference>
<dbReference type="GO" id="GO:0001675">
    <property type="term" value="P:acrosome assembly"/>
    <property type="evidence" value="ECO:0000250"/>
    <property type="project" value="UniProtKB"/>
</dbReference>
<dbReference type="GO" id="GO:0060271">
    <property type="term" value="P:cilium assembly"/>
    <property type="evidence" value="ECO:0000250"/>
    <property type="project" value="UniProtKB"/>
</dbReference>
<dbReference type="GO" id="GO:0006357">
    <property type="term" value="P:regulation of transcription by RNA polymerase II"/>
    <property type="evidence" value="ECO:0000250"/>
    <property type="project" value="UniProtKB"/>
</dbReference>
<dbReference type="GO" id="GO:0007286">
    <property type="term" value="P:spermatid development"/>
    <property type="evidence" value="ECO:0000250"/>
    <property type="project" value="UniProtKB"/>
</dbReference>
<dbReference type="FunFam" id="1.10.10.10:FF:000017">
    <property type="entry name" value="transcription factor RFX3 isoform X1"/>
    <property type="match status" value="1"/>
</dbReference>
<dbReference type="Gene3D" id="1.10.10.10">
    <property type="entry name" value="Winged helix-like DNA-binding domain superfamily/Winged helix DNA-binding domain"/>
    <property type="match status" value="1"/>
</dbReference>
<dbReference type="InterPro" id="IPR003150">
    <property type="entry name" value="DNA-bd_RFX"/>
</dbReference>
<dbReference type="InterPro" id="IPR039779">
    <property type="entry name" value="RFX-like"/>
</dbReference>
<dbReference type="InterPro" id="IPR007668">
    <property type="entry name" value="RFX1_trans_act"/>
</dbReference>
<dbReference type="InterPro" id="IPR036388">
    <property type="entry name" value="WH-like_DNA-bd_sf"/>
</dbReference>
<dbReference type="InterPro" id="IPR036390">
    <property type="entry name" value="WH_DNA-bd_sf"/>
</dbReference>
<dbReference type="PANTHER" id="PTHR12619:SF17">
    <property type="entry name" value="DNA-BINDING PROTEIN RFX2"/>
    <property type="match status" value="1"/>
</dbReference>
<dbReference type="PANTHER" id="PTHR12619">
    <property type="entry name" value="RFX TRANSCRIPTION FACTOR FAMILY"/>
    <property type="match status" value="1"/>
</dbReference>
<dbReference type="Pfam" id="PF25340">
    <property type="entry name" value="BCD_RFX"/>
    <property type="match status" value="1"/>
</dbReference>
<dbReference type="Pfam" id="PF04589">
    <property type="entry name" value="RFX1_trans_act"/>
    <property type="match status" value="1"/>
</dbReference>
<dbReference type="Pfam" id="PF02257">
    <property type="entry name" value="RFX_DNA_binding"/>
    <property type="match status" value="1"/>
</dbReference>
<dbReference type="SUPFAM" id="SSF46785">
    <property type="entry name" value="Winged helix' DNA-binding domain"/>
    <property type="match status" value="1"/>
</dbReference>
<dbReference type="PROSITE" id="PS51526">
    <property type="entry name" value="RFX_DBD"/>
    <property type="match status" value="1"/>
</dbReference>
<evidence type="ECO:0000250" key="1">
    <source>
        <dbReference type="UniProtKB" id="B2GV50"/>
    </source>
</evidence>
<evidence type="ECO:0000250" key="2">
    <source>
        <dbReference type="UniProtKB" id="P48378"/>
    </source>
</evidence>
<evidence type="ECO:0000250" key="3">
    <source>
        <dbReference type="UniProtKB" id="P48379"/>
    </source>
</evidence>
<evidence type="ECO:0000255" key="4">
    <source>
        <dbReference type="PROSITE-ProRule" id="PRU00858"/>
    </source>
</evidence>
<evidence type="ECO:0000256" key="5">
    <source>
        <dbReference type="SAM" id="MobiDB-lite"/>
    </source>
</evidence>
<protein>
    <recommendedName>
        <fullName>DNA-binding protein RFX2</fullName>
    </recommendedName>
    <alternativeName>
        <fullName>Regulatory factor X 2</fullName>
    </alternativeName>
</protein>
<name>RFX2_BOVIN</name>
<keyword id="KW-0970">Cilium biogenesis/degradation</keyword>
<keyword id="KW-0963">Cytoplasm</keyword>
<keyword id="KW-0221">Differentiation</keyword>
<keyword id="KW-0238">DNA-binding</keyword>
<keyword id="KW-0539">Nucleus</keyword>
<keyword id="KW-0597">Phosphoprotein</keyword>
<keyword id="KW-1185">Reference proteome</keyword>
<keyword id="KW-0744">Spermatogenesis</keyword>
<keyword id="KW-0804">Transcription</keyword>
<keyword id="KW-0805">Transcription regulation</keyword>
<comment type="function">
    <text evidence="3">Transcription factor that acts as a key regulator of spermatogenesis. Acts by regulating expression of genes required for the haploid phase during spermiogenesis, such as genes required for cilium assembly and function. Recognizes and binds the X-box, a regulatory motif with DNA sequence 5'-GTNRCC(0-3N)RGYAAC-3' present on promoters. Probably activates transcription of the testis-specific histone gene H1-6.</text>
</comment>
<comment type="subunit">
    <text evidence="3">Homodimer; probably only forms homodimers in testis. Heterodimer; heterodimerizes with RFX1 and RFX3.</text>
</comment>
<comment type="subcellular location">
    <subcellularLocation>
        <location evidence="1 4">Nucleus</location>
    </subcellularLocation>
    <subcellularLocation>
        <location evidence="1">Cytoplasm</location>
    </subcellularLocation>
    <text evidence="1">Mainly expressed in the nucleus and at lower level in cytoplasm.</text>
</comment>
<comment type="similarity">
    <text evidence="4">Belongs to the RFX family.</text>
</comment>
<feature type="chain" id="PRO_0000380693" description="DNA-binding protein RFX2">
    <location>
        <begin position="1"/>
        <end position="707"/>
    </location>
</feature>
<feature type="DNA-binding region" description="RFX-type winged-helix" evidence="4">
    <location>
        <begin position="204"/>
        <end position="279"/>
    </location>
</feature>
<feature type="region of interest" description="Disordered" evidence="5">
    <location>
        <begin position="297"/>
        <end position="337"/>
    </location>
</feature>
<feature type="compositionally biased region" description="Low complexity" evidence="5">
    <location>
        <begin position="315"/>
        <end position="337"/>
    </location>
</feature>
<feature type="modified residue" description="Phosphoserine" evidence="2">
    <location>
        <position position="33"/>
    </location>
</feature>
<feature type="modified residue" description="Phosphoserine" evidence="1">
    <location>
        <position position="420"/>
    </location>
</feature>
<gene>
    <name type="primary">RFX2</name>
</gene>
<proteinExistence type="evidence at transcript level"/>
<reference key="1">
    <citation type="submission" date="2007-06" db="EMBL/GenBank/DDBJ databases">
        <authorList>
            <consortium name="NIH - Mammalian Gene Collection (MGC) project"/>
        </authorList>
    </citation>
    <scope>NUCLEOTIDE SEQUENCE [LARGE SCALE MRNA]</scope>
    <source>
        <strain>Hereford</strain>
        <tissue>Fetal medulla</tissue>
    </source>
</reference>